<proteinExistence type="inferred from homology"/>
<name>BLAC_STRCE</name>
<protein>
    <recommendedName>
        <fullName>Beta-lactamase</fullName>
        <ecNumber>3.5.2.6</ecNumber>
    </recommendedName>
    <alternativeName>
        <fullName>Penicillinase</fullName>
    </alternativeName>
</protein>
<accession>Q06650</accession>
<gene>
    <name type="primary">bla</name>
</gene>
<keyword id="KW-0046">Antibiotic resistance</keyword>
<keyword id="KW-0378">Hydrolase</keyword>
<keyword id="KW-0521">NADP</keyword>
<keyword id="KW-0732">Signal</keyword>
<comment type="function">
    <text>Hydrolyzes benzylpenicillin and cloxacillin (at 10% of the rate of benzylpenicillin).</text>
</comment>
<comment type="catalytic activity">
    <reaction evidence="3">
        <text>a beta-lactam + H2O = a substituted beta-amino acid</text>
        <dbReference type="Rhea" id="RHEA:20401"/>
        <dbReference type="ChEBI" id="CHEBI:15377"/>
        <dbReference type="ChEBI" id="CHEBI:35627"/>
        <dbReference type="ChEBI" id="CHEBI:140347"/>
        <dbReference type="EC" id="3.5.2.6"/>
    </reaction>
</comment>
<comment type="PTM">
    <text>Predicted to be exported by the Tat system. The position of the signal peptide cleavage has not been experimentally proven.</text>
</comment>
<comment type="miscellaneous">
    <text evidence="5">The class A beta-lactamase family has a specific amino-acid numbering system, sometimes called Ambler or ABL numbering and often misspelt as Amber. A multiple sequence alignment was used to derive a consensus sequence and then the consensus was numbered taking into account insertions and deletions. This allows use of identical numbers, e.g. for active site residues, despite differences in protein length. UniProt always uses natural numbering of residues, hence there appear to be differences in numbering between this entry and some papers.</text>
</comment>
<comment type="similarity">
    <text evidence="4">Belongs to the class-A beta-lactamase family.</text>
</comment>
<feature type="signal peptide" description="Tat-type signal" evidence="2">
    <location>
        <begin position="1"/>
        <end position="36"/>
    </location>
</feature>
<feature type="chain" id="PRO_0000017015" description="Beta-lactamase">
    <location>
        <begin position="37"/>
        <end position="311"/>
    </location>
</feature>
<feature type="active site" description="Acyl-ester intermediate" evidence="3">
    <location>
        <position position="86"/>
    </location>
</feature>
<feature type="binding site" evidence="1">
    <location>
        <begin position="252"/>
        <end position="254"/>
    </location>
    <ligand>
        <name>substrate</name>
    </ligand>
</feature>
<dbReference type="EC" id="3.5.2.6"/>
<dbReference type="EMBL" id="D12653">
    <property type="protein sequence ID" value="BAA02176.1"/>
    <property type="molecule type" value="Genomic_DNA"/>
</dbReference>
<dbReference type="PIR" id="JN0520">
    <property type="entry name" value="JN0520"/>
</dbReference>
<dbReference type="SMR" id="Q06650"/>
<dbReference type="GO" id="GO:0008800">
    <property type="term" value="F:beta-lactamase activity"/>
    <property type="evidence" value="ECO:0007669"/>
    <property type="project" value="UniProtKB-EC"/>
</dbReference>
<dbReference type="GO" id="GO:0030655">
    <property type="term" value="P:beta-lactam antibiotic catabolic process"/>
    <property type="evidence" value="ECO:0007669"/>
    <property type="project" value="InterPro"/>
</dbReference>
<dbReference type="GO" id="GO:0046677">
    <property type="term" value="P:response to antibiotic"/>
    <property type="evidence" value="ECO:0007669"/>
    <property type="project" value="UniProtKB-KW"/>
</dbReference>
<dbReference type="Gene3D" id="3.40.710.10">
    <property type="entry name" value="DD-peptidase/beta-lactamase superfamily"/>
    <property type="match status" value="1"/>
</dbReference>
<dbReference type="InterPro" id="IPR012338">
    <property type="entry name" value="Beta-lactam/transpept-like"/>
</dbReference>
<dbReference type="InterPro" id="IPR045155">
    <property type="entry name" value="Beta-lactam_cat"/>
</dbReference>
<dbReference type="InterPro" id="IPR000871">
    <property type="entry name" value="Beta-lactam_class-A"/>
</dbReference>
<dbReference type="InterPro" id="IPR023650">
    <property type="entry name" value="Beta-lactam_class-A_AS"/>
</dbReference>
<dbReference type="InterPro" id="IPR006311">
    <property type="entry name" value="TAT_signal"/>
</dbReference>
<dbReference type="NCBIfam" id="NF033103">
    <property type="entry name" value="bla_class_A"/>
    <property type="match status" value="1"/>
</dbReference>
<dbReference type="PANTHER" id="PTHR35333">
    <property type="entry name" value="BETA-LACTAMASE"/>
    <property type="match status" value="1"/>
</dbReference>
<dbReference type="PANTHER" id="PTHR35333:SF3">
    <property type="entry name" value="BETA-LACTAMASE-TYPE TRANSPEPTIDASE FOLD CONTAINING PROTEIN"/>
    <property type="match status" value="1"/>
</dbReference>
<dbReference type="Pfam" id="PF13354">
    <property type="entry name" value="Beta-lactamase2"/>
    <property type="match status" value="1"/>
</dbReference>
<dbReference type="PRINTS" id="PR00118">
    <property type="entry name" value="BLACTAMASEA"/>
</dbReference>
<dbReference type="SUPFAM" id="SSF56601">
    <property type="entry name" value="beta-lactamase/transpeptidase-like"/>
    <property type="match status" value="1"/>
</dbReference>
<dbReference type="PROSITE" id="PS00146">
    <property type="entry name" value="BETA_LACTAMASE_A"/>
    <property type="match status" value="1"/>
</dbReference>
<dbReference type="PROSITE" id="PS51318">
    <property type="entry name" value="TAT"/>
    <property type="match status" value="1"/>
</dbReference>
<reference key="1">
    <citation type="journal article" date="1993" name="Gene">
        <title>Sequence of a gene encoding beta-lactamase from Streptomyces cellulosae.</title>
        <authorList>
            <person name="Ogawara H."/>
        </authorList>
    </citation>
    <scope>NUCLEOTIDE SEQUENCE [GENOMIC DNA]</scope>
    <source>
        <strain>ATCC 3313 / DSM 40802 / NBRC 3713 / AD-119 / KCC S-0127</strain>
    </source>
</reference>
<reference key="2">
    <citation type="journal article" date="1991" name="Biochem. J.">
        <title>A standard numbering scheme for the class A beta-lactamases.</title>
        <authorList>
            <person name="Ambler R.P."/>
            <person name="Coulson A.F."/>
            <person name="Frere J.M."/>
            <person name="Ghuysen J.M."/>
            <person name="Joris B."/>
            <person name="Forsman M."/>
            <person name="Levesque R.C."/>
            <person name="Tiraby G."/>
            <person name="Waley S.G."/>
        </authorList>
    </citation>
    <scope>AMINO ACID NUMBERING SCHEME</scope>
</reference>
<sequence length="311" mass="33137">MRKPTSSLTRRSVLGAGLGLGGALALGSTTASAASAGTTPSENPAAVRRLRALEREHQARIGVFALNLATGASLLHRAHELFPMCSVFKTLAAAAVLRDLDHDGSQLARVIRYTEADVTKSGHAPVTKDHIDTGMTIRDLCDATIRYSDNCAANLLLRELGGPTAVTRFCRSLGDPVTRLDRWEPELNSGEPDRRTDTTSPYAIARTYQRLVLGNALNRPDRALLTDWLLRNTTTLTTFRTGLPKGWTVADKSGGGDTYGTRNEAAIAWTPDGAPVLLTALTHKPSLPTAPGDTPLIIKLATVLSEAVAPA</sequence>
<evidence type="ECO:0000250" key="1"/>
<evidence type="ECO:0000255" key="2">
    <source>
        <dbReference type="PROSITE-ProRule" id="PRU00648"/>
    </source>
</evidence>
<evidence type="ECO:0000255" key="3">
    <source>
        <dbReference type="PROSITE-ProRule" id="PRU10101"/>
    </source>
</evidence>
<evidence type="ECO:0000305" key="4"/>
<evidence type="ECO:0000305" key="5">
    <source>
    </source>
</evidence>
<organism>
    <name type="scientific">Streptomyces cellulosae</name>
    <dbReference type="NCBI Taxonomy" id="1968"/>
    <lineage>
        <taxon>Bacteria</taxon>
        <taxon>Bacillati</taxon>
        <taxon>Actinomycetota</taxon>
        <taxon>Actinomycetes</taxon>
        <taxon>Kitasatosporales</taxon>
        <taxon>Streptomycetaceae</taxon>
        <taxon>Streptomyces</taxon>
    </lineage>
</organism>